<dbReference type="EMBL" id="AP009179">
    <property type="protein sequence ID" value="BAF72719.1"/>
    <property type="molecule type" value="Genomic_DNA"/>
</dbReference>
<dbReference type="RefSeq" id="WP_012083529.1">
    <property type="nucleotide sequence ID" value="NC_009663.1"/>
</dbReference>
<dbReference type="SMR" id="A6QB60"/>
<dbReference type="STRING" id="387093.SUN_1772"/>
<dbReference type="KEGG" id="sun:SUN_1772"/>
<dbReference type="eggNOG" id="COG0224">
    <property type="taxonomic scope" value="Bacteria"/>
</dbReference>
<dbReference type="HOGENOM" id="CLU_050669_0_1_7"/>
<dbReference type="OrthoDB" id="9812769at2"/>
<dbReference type="Proteomes" id="UP000006378">
    <property type="component" value="Chromosome"/>
</dbReference>
<dbReference type="GO" id="GO:0005886">
    <property type="term" value="C:plasma membrane"/>
    <property type="evidence" value="ECO:0007669"/>
    <property type="project" value="UniProtKB-SubCell"/>
</dbReference>
<dbReference type="GO" id="GO:0045259">
    <property type="term" value="C:proton-transporting ATP synthase complex"/>
    <property type="evidence" value="ECO:0007669"/>
    <property type="project" value="UniProtKB-KW"/>
</dbReference>
<dbReference type="GO" id="GO:0005524">
    <property type="term" value="F:ATP binding"/>
    <property type="evidence" value="ECO:0007669"/>
    <property type="project" value="UniProtKB-UniRule"/>
</dbReference>
<dbReference type="GO" id="GO:0046933">
    <property type="term" value="F:proton-transporting ATP synthase activity, rotational mechanism"/>
    <property type="evidence" value="ECO:0007669"/>
    <property type="project" value="UniProtKB-UniRule"/>
</dbReference>
<dbReference type="GO" id="GO:0042777">
    <property type="term" value="P:proton motive force-driven plasma membrane ATP synthesis"/>
    <property type="evidence" value="ECO:0007669"/>
    <property type="project" value="UniProtKB-UniRule"/>
</dbReference>
<dbReference type="CDD" id="cd12151">
    <property type="entry name" value="F1-ATPase_gamma"/>
    <property type="match status" value="1"/>
</dbReference>
<dbReference type="FunFam" id="1.10.287.80:FF:000007">
    <property type="entry name" value="ATP synthase gamma chain"/>
    <property type="match status" value="1"/>
</dbReference>
<dbReference type="FunFam" id="3.40.1380.10:FF:000006">
    <property type="entry name" value="ATP synthase gamma chain"/>
    <property type="match status" value="1"/>
</dbReference>
<dbReference type="Gene3D" id="3.40.1380.10">
    <property type="match status" value="1"/>
</dbReference>
<dbReference type="Gene3D" id="1.10.287.80">
    <property type="entry name" value="ATP synthase, gamma subunit, helix hairpin domain"/>
    <property type="match status" value="1"/>
</dbReference>
<dbReference type="HAMAP" id="MF_00815">
    <property type="entry name" value="ATP_synth_gamma_bact"/>
    <property type="match status" value="1"/>
</dbReference>
<dbReference type="InterPro" id="IPR035968">
    <property type="entry name" value="ATP_synth_F1_ATPase_gsu"/>
</dbReference>
<dbReference type="InterPro" id="IPR000131">
    <property type="entry name" value="ATP_synth_F1_gsu"/>
</dbReference>
<dbReference type="NCBIfam" id="TIGR01146">
    <property type="entry name" value="ATPsyn_F1gamma"/>
    <property type="match status" value="1"/>
</dbReference>
<dbReference type="PANTHER" id="PTHR11693">
    <property type="entry name" value="ATP SYNTHASE GAMMA CHAIN"/>
    <property type="match status" value="1"/>
</dbReference>
<dbReference type="PANTHER" id="PTHR11693:SF22">
    <property type="entry name" value="ATP SYNTHASE SUBUNIT GAMMA, MITOCHONDRIAL"/>
    <property type="match status" value="1"/>
</dbReference>
<dbReference type="Pfam" id="PF00231">
    <property type="entry name" value="ATP-synt"/>
    <property type="match status" value="1"/>
</dbReference>
<dbReference type="PRINTS" id="PR00126">
    <property type="entry name" value="ATPASEGAMMA"/>
</dbReference>
<dbReference type="SUPFAM" id="SSF52943">
    <property type="entry name" value="ATP synthase (F1-ATPase), gamma subunit"/>
    <property type="match status" value="1"/>
</dbReference>
<accession>A6QB60</accession>
<feature type="chain" id="PRO_1000053358" description="ATP synthase gamma chain">
    <location>
        <begin position="1"/>
        <end position="295"/>
    </location>
</feature>
<reference key="1">
    <citation type="journal article" date="2007" name="Proc. Natl. Acad. Sci. U.S.A.">
        <title>Deep-sea vent epsilon-proteobacterial genomes provide insights into emergence of pathogens.</title>
        <authorList>
            <person name="Nakagawa S."/>
            <person name="Takaki Y."/>
            <person name="Shimamura S."/>
            <person name="Reysenbach A.-L."/>
            <person name="Takai K."/>
            <person name="Horikoshi K."/>
        </authorList>
    </citation>
    <scope>NUCLEOTIDE SEQUENCE [LARGE SCALE GENOMIC DNA]</scope>
    <source>
        <strain>NBC37-1</strain>
    </source>
</reference>
<protein>
    <recommendedName>
        <fullName evidence="1">ATP synthase gamma chain</fullName>
    </recommendedName>
    <alternativeName>
        <fullName evidence="1">ATP synthase F1 sector gamma subunit</fullName>
    </alternativeName>
    <alternativeName>
        <fullName evidence="1">F-ATPase gamma subunit</fullName>
    </alternativeName>
</protein>
<sequence length="295" mass="33114">MANLKEIKRKISSVKNTQKTTNAMKLVSSAKLKRTEELAKRSRVYAAKLTELIEEIAQKMQHASAEGLDNIFFQENNNPKKVDIIFITADKGLCGGFNSQTIKRTSQMIAEYQSKGAKVRLRAIGRKGIDYFKFNNVELDDAIVGLSAAPDYKQSSEFISEVVTSYVNGDTDRIVLVHNGYVNMITQEIREDQILPVDASQLELSTVSTSEMEVEPDDDDTLLDALVKRYVEYSIYYALIDSLAAEHSARMQAMDAATKNAKEMVKDLNVKYNKARQEAITTELIEIISGMESMK</sequence>
<keyword id="KW-0066">ATP synthesis</keyword>
<keyword id="KW-0997">Cell inner membrane</keyword>
<keyword id="KW-1003">Cell membrane</keyword>
<keyword id="KW-0139">CF(1)</keyword>
<keyword id="KW-0375">Hydrogen ion transport</keyword>
<keyword id="KW-0406">Ion transport</keyword>
<keyword id="KW-0472">Membrane</keyword>
<keyword id="KW-0813">Transport</keyword>
<proteinExistence type="inferred from homology"/>
<name>ATPG_SULNB</name>
<organism>
    <name type="scientific">Sulfurovum sp. (strain NBC37-1)</name>
    <dbReference type="NCBI Taxonomy" id="387093"/>
    <lineage>
        <taxon>Bacteria</taxon>
        <taxon>Pseudomonadati</taxon>
        <taxon>Campylobacterota</taxon>
        <taxon>Epsilonproteobacteria</taxon>
        <taxon>Campylobacterales</taxon>
        <taxon>Sulfurovaceae</taxon>
        <taxon>Sulfurovum</taxon>
    </lineage>
</organism>
<comment type="function">
    <text evidence="1">Produces ATP from ADP in the presence of a proton gradient across the membrane. The gamma chain is believed to be important in regulating ATPase activity and the flow of protons through the CF(0) complex.</text>
</comment>
<comment type="subunit">
    <text evidence="1">F-type ATPases have 2 components, CF(1) - the catalytic core - and CF(0) - the membrane proton channel. CF(1) has five subunits: alpha(3), beta(3), gamma(1), delta(1), epsilon(1). CF(0) has three main subunits: a, b and c.</text>
</comment>
<comment type="subcellular location">
    <subcellularLocation>
        <location evidence="1">Cell inner membrane</location>
        <topology evidence="1">Peripheral membrane protein</topology>
    </subcellularLocation>
</comment>
<comment type="similarity">
    <text evidence="1">Belongs to the ATPase gamma chain family.</text>
</comment>
<gene>
    <name evidence="1" type="primary">atpG</name>
    <name type="ordered locus">SUN_1772</name>
</gene>
<evidence type="ECO:0000255" key="1">
    <source>
        <dbReference type="HAMAP-Rule" id="MF_00815"/>
    </source>
</evidence>